<proteinExistence type="evidence at protein level"/>
<name>ORTA_ACESD</name>
<dbReference type="EC" id="2.3.1.263" evidence="2"/>
<dbReference type="EMBL" id="FP565809">
    <property type="protein sequence ID" value="CBH21413.1"/>
    <property type="molecule type" value="Genomic_DNA"/>
</dbReference>
<dbReference type="STRING" id="1511.CLOST_1293"/>
<dbReference type="KEGG" id="cst:CLOST_1293"/>
<dbReference type="eggNOG" id="ENOG503315M">
    <property type="taxonomic scope" value="Bacteria"/>
</dbReference>
<dbReference type="HOGENOM" id="CLU_2286677_0_0_9"/>
<dbReference type="Proteomes" id="UP000007041">
    <property type="component" value="Chromosome"/>
</dbReference>
<dbReference type="GO" id="GO:0016740">
    <property type="term" value="F:transferase activity"/>
    <property type="evidence" value="ECO:0007669"/>
    <property type="project" value="UniProtKB-KW"/>
</dbReference>
<dbReference type="GO" id="GO:0006591">
    <property type="term" value="P:ornithine metabolic process"/>
    <property type="evidence" value="ECO:0000314"/>
    <property type="project" value="UniProtKB"/>
</dbReference>
<dbReference type="InterPro" id="IPR047755">
    <property type="entry name" value="OrtA"/>
</dbReference>
<dbReference type="NCBIfam" id="NF040739">
    <property type="entry name" value="ornith_OrtA"/>
    <property type="match status" value="1"/>
</dbReference>
<dbReference type="Pfam" id="PF22010">
    <property type="entry name" value="OrtA"/>
    <property type="match status" value="1"/>
</dbReference>
<gene>
    <name evidence="1" type="primary">ortA</name>
    <name evidence="5" type="ordered locus">CLOST_1293</name>
</gene>
<reference key="1">
    <citation type="journal article" date="2010" name="BMC Genomics">
        <title>Clostridium sticklandii, a specialist in amino acid degradation:revisiting its metabolism through its genome sequence.</title>
        <authorList>
            <person name="Fonknechten N."/>
            <person name="Chaussonnerie S."/>
            <person name="Tricot S."/>
            <person name="Lajus A."/>
            <person name="Andreesen J.R."/>
            <person name="Perchat N."/>
            <person name="Pelletier E."/>
            <person name="Gouyvenoux M."/>
            <person name="Barbe V."/>
            <person name="Salanoubat M."/>
            <person name="Le Paslier D."/>
            <person name="Weissenbach J."/>
            <person name="Cohen G.N."/>
            <person name="Kreimeyer A."/>
        </authorList>
    </citation>
    <scope>NUCLEOTIDE SEQUENCE [LARGE SCALE GENOMIC DNA]</scope>
    <source>
        <strain>ATCC 12662 / DSM 519 / JCM 1433 / CCUG 9281 / NCIMB 10654 / HF</strain>
    </source>
</reference>
<reference key="2">
    <citation type="journal article" date="1974" name="Biochemistry">
        <title>Ornithine degradation in Clostridium sticklandii; pyridoxal phosphate and coenzyme A dependent thiolytic cleavage of 2-amino-4-ketopentanoate to alanine and acetyl coenzyme A.</title>
        <authorList>
            <person name="Jeng I.M."/>
            <person name="Somack R."/>
            <person name="Barker H.A."/>
        </authorList>
    </citation>
    <scope>FUNCTION</scope>
    <scope>CATALYTIC ACTIVITY</scope>
    <scope>ACTIVITY REGULATION</scope>
    <source>
        <strain>ATCC 12662 / DSM 519 / JCM 1433 / CCUG 9281 / NCIMB 10654 / HF</strain>
    </source>
</reference>
<sequence length="101" mass="11569">MAKKGDWVLIHKIVLSPEERAPQVPDDTKKVPLEMWIKGYLNEDAQIGDQVSITTRTKRVEEGKLLEVNPYYTHDFGKFVPELLKISEQVREITFGGEGNE</sequence>
<organism>
    <name type="scientific">Acetoanaerobium sticklandii (strain ATCC 12662 / DSM 519 / JCM 1433 / CCUG 9281 / NCIMB 10654 / HF)</name>
    <name type="common">Clostridium sticklandii</name>
    <dbReference type="NCBI Taxonomy" id="499177"/>
    <lineage>
        <taxon>Bacteria</taxon>
        <taxon>Bacillati</taxon>
        <taxon>Bacillota</taxon>
        <taxon>Clostridia</taxon>
        <taxon>Peptostreptococcales</taxon>
        <taxon>Filifactoraceae</taxon>
        <taxon>Acetoanaerobium</taxon>
    </lineage>
</organism>
<protein>
    <recommendedName>
        <fullName evidence="3">2-amino-4-ketopentanoate thiolase alpha subunit</fullName>
        <ecNumber evidence="2">2.3.1.263</ecNumber>
    </recommendedName>
    <alternativeName>
        <fullName evidence="3">AKP thiolase</fullName>
        <shortName evidence="3">AKPT</shortName>
    </alternativeName>
</protein>
<comment type="function">
    <text evidence="2">Involved in the ornithine fermentation pathway. Catalyzes the thiolytic cleavage of 2-amino-4-ketopentanoate (AKP) with coenzyme A (CoA) to form acetyl-CoA and alanine. It is strictly specific for AKP.</text>
</comment>
<comment type="catalytic activity">
    <reaction evidence="2">
        <text>D-alanine + acetyl-CoA = (2R)-2-amino-4-oxopentanoate + CoA</text>
        <dbReference type="Rhea" id="RHEA:51436"/>
        <dbReference type="ChEBI" id="CHEBI:57287"/>
        <dbReference type="ChEBI" id="CHEBI:57288"/>
        <dbReference type="ChEBI" id="CHEBI:57416"/>
        <dbReference type="ChEBI" id="CHEBI:134102"/>
        <dbReference type="EC" id="2.3.1.263"/>
    </reaction>
</comment>
<comment type="activity regulation">
    <text evidence="2">Completely inhibited by p-chloromercuribenzoate (p-ClHgBzO) and acetyl-CoA, and partially inhibited by N-ethylmaleimide.</text>
</comment>
<comment type="subunit">
    <text evidence="1">Heterodimer with OrtB.</text>
</comment>
<comment type="similarity">
    <text evidence="4">Belongs to the OrtA family.</text>
</comment>
<feature type="chain" id="PRO_0000438118" description="2-amino-4-ketopentanoate thiolase alpha subunit">
    <location>
        <begin position="1"/>
        <end position="101"/>
    </location>
</feature>
<evidence type="ECO:0000250" key="1">
    <source>
        <dbReference type="UniProtKB" id="C1FW06"/>
    </source>
</evidence>
<evidence type="ECO:0000269" key="2">
    <source>
    </source>
</evidence>
<evidence type="ECO:0000303" key="3">
    <source>
    </source>
</evidence>
<evidence type="ECO:0000305" key="4"/>
<evidence type="ECO:0000312" key="5">
    <source>
        <dbReference type="EMBL" id="CBH21413.1"/>
    </source>
</evidence>
<accession>E3PY98</accession>
<keyword id="KW-1185">Reference proteome</keyword>
<keyword id="KW-0808">Transferase</keyword>